<name>PDH1_PENVA</name>
<feature type="signal peptide" evidence="2">
    <location>
        <begin position="1"/>
        <end position="22"/>
    </location>
</feature>
<feature type="peptide" id="PRO_0000043331" description="PDH precursor-related peptide">
    <location>
        <begin position="23"/>
        <end position="56"/>
    </location>
</feature>
<feature type="peptide" id="PRO_0000043332" description="Pigment-dispersing hormone">
    <location>
        <begin position="59"/>
        <end position="76"/>
    </location>
</feature>
<feature type="modified residue" description="Alanine amide" evidence="1">
    <location>
        <position position="76"/>
    </location>
</feature>
<proteinExistence type="evidence at transcript level"/>
<reference key="1">
    <citation type="journal article" date="1996" name="Biochem. Biophys. Res. Commun.">
        <title>Molecular cloning of the precursors of pigment-dispersing hormone in Crustaceans.</title>
        <authorList>
            <person name="Desmoucelles-Carette C."/>
            <person name="Sellos D."/>
            <person name="Van Wormhoudt A."/>
        </authorList>
    </citation>
    <scope>NUCLEOTIDE SEQUENCE [MRNA]</scope>
    <source>
        <tissue>Eyestalk</tissue>
    </source>
</reference>
<accession>P91963</accession>
<gene>
    <name type="primary">PDH1</name>
</gene>
<keyword id="KW-0027">Amidation</keyword>
<keyword id="KW-0165">Cleavage on pair of basic residues</keyword>
<keyword id="KW-0372">Hormone</keyword>
<keyword id="KW-0529">Neurotransmitter</keyword>
<keyword id="KW-0964">Secreted</keyword>
<keyword id="KW-0732">Signal</keyword>
<organism>
    <name type="scientific">Penaeus vannamei</name>
    <name type="common">Whiteleg shrimp</name>
    <name type="synonym">Litopenaeus vannamei</name>
    <dbReference type="NCBI Taxonomy" id="6689"/>
    <lineage>
        <taxon>Eukaryota</taxon>
        <taxon>Metazoa</taxon>
        <taxon>Ecdysozoa</taxon>
        <taxon>Arthropoda</taxon>
        <taxon>Crustacea</taxon>
        <taxon>Multicrustacea</taxon>
        <taxon>Malacostraca</taxon>
        <taxon>Eumalacostraca</taxon>
        <taxon>Eucarida</taxon>
        <taxon>Decapoda</taxon>
        <taxon>Dendrobranchiata</taxon>
        <taxon>Penaeoidea</taxon>
        <taxon>Penaeidae</taxon>
        <taxon>Penaeus</taxon>
    </lineage>
</organism>
<sequence length="79" mass="8561">MRSAVVVALLVMVAMSLQLTAAQEDLKYFEREVVAELAAQILRVAQGPSAFVAGPHKRNSELINSLLGIPKVMNDAGRR</sequence>
<dbReference type="EMBL" id="Y11723">
    <property type="protein sequence ID" value="CAA72409.1"/>
    <property type="status" value="ALT_INIT"/>
    <property type="molecule type" value="mRNA"/>
</dbReference>
<dbReference type="EnsemblMetazoa" id="XM_027382771.1">
    <property type="protein sequence ID" value="XP_027238572.1"/>
    <property type="gene ID" value="LOC113829575"/>
</dbReference>
<dbReference type="OrthoDB" id="6378554at2759"/>
<dbReference type="GO" id="GO:0005576">
    <property type="term" value="C:extracellular region"/>
    <property type="evidence" value="ECO:0007669"/>
    <property type="project" value="UniProtKB-SubCell"/>
</dbReference>
<dbReference type="GO" id="GO:0045202">
    <property type="term" value="C:synapse"/>
    <property type="evidence" value="ECO:0007669"/>
    <property type="project" value="GOC"/>
</dbReference>
<dbReference type="GO" id="GO:0005179">
    <property type="term" value="F:hormone activity"/>
    <property type="evidence" value="ECO:0007669"/>
    <property type="project" value="UniProtKB-KW"/>
</dbReference>
<dbReference type="GO" id="GO:0007268">
    <property type="term" value="P:chemical synaptic transmission"/>
    <property type="evidence" value="ECO:0007669"/>
    <property type="project" value="UniProtKB-KW"/>
</dbReference>
<dbReference type="GO" id="GO:0009416">
    <property type="term" value="P:response to light stimulus"/>
    <property type="evidence" value="ECO:0007669"/>
    <property type="project" value="InterPro"/>
</dbReference>
<dbReference type="InterPro" id="IPR009396">
    <property type="entry name" value="Pigment_DH"/>
</dbReference>
<dbReference type="Pfam" id="PF06324">
    <property type="entry name" value="Pigment_DH"/>
    <property type="match status" value="1"/>
</dbReference>
<evidence type="ECO:0000250" key="1"/>
<evidence type="ECO:0000255" key="2"/>
<evidence type="ECO:0000305" key="3"/>
<comment type="function">
    <text evidence="1">The pigment-dispersing hormone causes the migration of the distal retinal pigment into the proximal end of the pigment chromatophore cells and thus decreases the amount of light entering the retinulas. May also function as a neurotransmitter and/or neuromodulator (By similarity).</text>
</comment>
<comment type="subcellular location">
    <subcellularLocation>
        <location evidence="1">Secreted</location>
    </subcellularLocation>
</comment>
<comment type="tissue specificity">
    <text>Eyestalk.</text>
</comment>
<comment type="miscellaneous">
    <text>The function of PDH precursor-related peptide is unknown. The sequence is not well-conserved among different species and that might be an indication that it is inactive.</text>
</comment>
<comment type="similarity">
    <text evidence="3">Belongs to the arthropod PDH family.</text>
</comment>
<comment type="sequence caution" evidence="3">
    <conflict type="erroneous initiation">
        <sequence resource="EMBL-CDS" id="CAA72409"/>
    </conflict>
    <text>Extended N-terminus.</text>
</comment>
<protein>
    <recommendedName>
        <fullName>Pigment-dispersing hormone type 1</fullName>
    </recommendedName>
    <component>
        <recommendedName>
            <fullName>PDH precursor-related peptide</fullName>
            <shortName>PPRD</shortName>
        </recommendedName>
    </component>
    <component>
        <recommendedName>
            <fullName>Pigment-dispersing hormone</fullName>
            <shortName>PDH</shortName>
        </recommendedName>
    </component>
</protein>